<dbReference type="EC" id="2.7.7.6"/>
<dbReference type="EMBL" id="AF198100">
    <property type="protein sequence ID" value="AAF44481.1"/>
    <property type="molecule type" value="Genomic_DNA"/>
</dbReference>
<dbReference type="RefSeq" id="NP_039100.1">
    <property type="nucleotide sequence ID" value="NC_002188.1"/>
</dbReference>
<dbReference type="SMR" id="Q9J593"/>
<dbReference type="GeneID" id="1486685"/>
<dbReference type="KEGG" id="vg:1486685"/>
<dbReference type="Proteomes" id="UP000008597">
    <property type="component" value="Segment"/>
</dbReference>
<dbReference type="GO" id="GO:0000428">
    <property type="term" value="C:DNA-directed RNA polymerase complex"/>
    <property type="evidence" value="ECO:0007669"/>
    <property type="project" value="UniProtKB-KW"/>
</dbReference>
<dbReference type="GO" id="GO:0044423">
    <property type="term" value="C:virion component"/>
    <property type="evidence" value="ECO:0007669"/>
    <property type="project" value="UniProtKB-KW"/>
</dbReference>
<dbReference type="GO" id="GO:0003677">
    <property type="term" value="F:DNA binding"/>
    <property type="evidence" value="ECO:0007669"/>
    <property type="project" value="InterPro"/>
</dbReference>
<dbReference type="GO" id="GO:0003899">
    <property type="term" value="F:DNA-directed RNA polymerase activity"/>
    <property type="evidence" value="ECO:0007669"/>
    <property type="project" value="UniProtKB-EC"/>
</dbReference>
<dbReference type="GO" id="GO:0006351">
    <property type="term" value="P:DNA-templated transcription"/>
    <property type="evidence" value="ECO:0007669"/>
    <property type="project" value="InterPro"/>
</dbReference>
<dbReference type="Gene3D" id="1.10.132.30">
    <property type="match status" value="1"/>
</dbReference>
<dbReference type="Gene3D" id="2.40.40.20">
    <property type="match status" value="1"/>
</dbReference>
<dbReference type="Gene3D" id="6.10.250.2940">
    <property type="match status" value="1"/>
</dbReference>
<dbReference type="Gene3D" id="3.30.1490.180">
    <property type="entry name" value="RNA polymerase ii"/>
    <property type="match status" value="1"/>
</dbReference>
<dbReference type="Gene3D" id="4.10.860.120">
    <property type="entry name" value="RNA polymerase II, clamp domain"/>
    <property type="match status" value="1"/>
</dbReference>
<dbReference type="Gene3D" id="1.10.274.100">
    <property type="entry name" value="RNA polymerase Rpb1, domain 3"/>
    <property type="match status" value="1"/>
</dbReference>
<dbReference type="InterPro" id="IPR045867">
    <property type="entry name" value="DNA-dir_RpoC_beta_prime"/>
</dbReference>
<dbReference type="InterPro" id="IPR000722">
    <property type="entry name" value="RNA_pol_asu"/>
</dbReference>
<dbReference type="InterPro" id="IPR006592">
    <property type="entry name" value="RNA_pol_N"/>
</dbReference>
<dbReference type="InterPro" id="IPR007066">
    <property type="entry name" value="RNA_pol_Rpb1_3"/>
</dbReference>
<dbReference type="InterPro" id="IPR042102">
    <property type="entry name" value="RNA_pol_Rpb1_3_sf"/>
</dbReference>
<dbReference type="InterPro" id="IPR007083">
    <property type="entry name" value="RNA_pol_Rpb1_4"/>
</dbReference>
<dbReference type="InterPro" id="IPR007081">
    <property type="entry name" value="RNA_pol_Rpb1_5"/>
</dbReference>
<dbReference type="InterPro" id="IPR044893">
    <property type="entry name" value="RNA_pol_Rpb1_clamp_domain"/>
</dbReference>
<dbReference type="InterPro" id="IPR038120">
    <property type="entry name" value="Rpb1_funnel_sf"/>
</dbReference>
<dbReference type="PANTHER" id="PTHR19376">
    <property type="entry name" value="DNA-DIRECTED RNA POLYMERASE"/>
    <property type="match status" value="1"/>
</dbReference>
<dbReference type="PANTHER" id="PTHR19376:SF37">
    <property type="entry name" value="DNA-DIRECTED RNA POLYMERASE II SUBUNIT RPB1"/>
    <property type="match status" value="1"/>
</dbReference>
<dbReference type="Pfam" id="PF00623">
    <property type="entry name" value="RNA_pol_Rpb1_2"/>
    <property type="match status" value="1"/>
</dbReference>
<dbReference type="Pfam" id="PF04983">
    <property type="entry name" value="RNA_pol_Rpb1_3"/>
    <property type="match status" value="1"/>
</dbReference>
<dbReference type="Pfam" id="PF05000">
    <property type="entry name" value="RNA_pol_Rpb1_4"/>
    <property type="match status" value="1"/>
</dbReference>
<dbReference type="Pfam" id="PF04998">
    <property type="entry name" value="RNA_pol_Rpb1_5"/>
    <property type="match status" value="1"/>
</dbReference>
<dbReference type="SMART" id="SM00663">
    <property type="entry name" value="RPOLA_N"/>
    <property type="match status" value="1"/>
</dbReference>
<dbReference type="SUPFAM" id="SSF64484">
    <property type="entry name" value="beta and beta-prime subunits of DNA dependent RNA-polymerase"/>
    <property type="match status" value="1"/>
</dbReference>
<organism>
    <name type="scientific">Fowlpox virus (strain NVSL)</name>
    <name type="common">FPV</name>
    <dbReference type="NCBI Taxonomy" id="928301"/>
    <lineage>
        <taxon>Viruses</taxon>
        <taxon>Varidnaviria</taxon>
        <taxon>Bamfordvirae</taxon>
        <taxon>Nucleocytoviricota</taxon>
        <taxon>Pokkesviricetes</taxon>
        <taxon>Chitovirales</taxon>
        <taxon>Poxviridae</taxon>
        <taxon>Chordopoxvirinae</taxon>
        <taxon>Avipoxvirus</taxon>
        <taxon>Fowlpox virus</taxon>
    </lineage>
</organism>
<gene>
    <name type="primary">OPG105</name>
    <name type="synonym">RPO147</name>
    <name type="ordered locus">FPV137</name>
</gene>
<name>RP147_FOWPN</name>
<keyword id="KW-0240">DNA-directed RNA polymerase</keyword>
<keyword id="KW-0548">Nucleotidyltransferase</keyword>
<keyword id="KW-1185">Reference proteome</keyword>
<keyword id="KW-0804">Transcription</keyword>
<keyword id="KW-0808">Transferase</keyword>
<keyword id="KW-0946">Virion</keyword>
<organismHost>
    <name type="scientific">Vertebrata</name>
    <dbReference type="NCBI Taxonomy" id="7742"/>
</organismHost>
<accession>Q9J593</accession>
<reference key="1">
    <citation type="journal article" date="2000" name="J. Virol.">
        <title>The genome of fowlpox virus.</title>
        <authorList>
            <person name="Afonso C.L."/>
            <person name="Tulman E.R."/>
            <person name="Lu Z."/>
            <person name="Zsak L."/>
            <person name="Kutish G.F."/>
            <person name="Rock D.L."/>
        </authorList>
    </citation>
    <scope>NUCLEOTIDE SEQUENCE [LARGE SCALE GENOMIC DNA]</scope>
</reference>
<protein>
    <recommendedName>
        <fullName>DNA-directed RNA polymerase 147 kDa polypeptide</fullName>
        <ecNumber>2.7.7.6</ecNumber>
    </recommendedName>
</protein>
<sequence length="1287" mass="147998">MSVISKVSYSLYSQNEINATDININYVKDDDEVGTVKDSRLGATDGVLCRTCNRTELECFGHWGKVRIYENIIIKPEYISEVIRILGHICLTCGLLRSREPYTVNISSLTSGELKKLKDKISSKKKSCWNSRCMQPYQKVNFSKKKVCLVNKTDEFCVPNALVYEKITSIHHKFWPVLDIHQDPATLFYRGYFSIPPLLIRPVISFWIDNVPKDTNELTYLLGVIVKHCNANADEPTIQKAIIEYDNIKLISTNSTTNNLSYITSGKTNMLRSFVVARRKDQTARSVLGPDSSLDITEVGIPDYVRNTLTEKIFINAFTIDKVKDMFQRGEIKYYFNKQLHQLTKIKQNKFIKNKIHLLPGDWVETNIQEFTNIIFGRQPSLHRYNVISSSVRKTEEDTIKIPPGIANSQNADFDGDEEWTIVEQNPKSVIEQSILMYPTTLLKHDVHGMPVYGSIQDEILAAYNLFREYDLTQDEVLNILGKYGLEFLTDYERKDKYTGKDIFKFLINEPEINYPGIICNGEIIAENIDSNFIVSMKHMSISGLITDYKSSVEGIKFINKASYVFKRYLKIYGFSITFRNLCPDFEFTKKLREQNIKKINDIKHSYVKYLYDVANGDIIPLSRSDEMDAVDSILSGLTNFNIQEIEKYMKEVISKDPDNSLMKMSCAGYKVNPTELMYILGTYGQQRIDGEPIDTKIYGRVLPYFLPDSKDPEGKGYILNSLIQGLTGSQYYYAMLIARSQSTDIVCETSRTGTLARKIIKKMEDMVVDSYGQIVYGNTLVKYAANYTKIQGSVCKSVELIYPDESLTWFLEISALWDKLKNGFIYNQGQKIAKYILAPFNFKVFMKLDETNPMKSKDLYDKIQLVIKDVRENYFFDVTSIDFIEYVFLTHLNPSRVKVSEDTANLIFEKLYEKLNYTLGGGTPIGIISAQVLSEKFTQQALSSFHTTEKSGGIKRKLGFNEFNQLTNLSKNKTEIITLISDDITKLQTIKMNFEFVYLGELFPEITIEEDKNYYRIDINVNRLYIKRNQLTELIVEYMLEKFVSYSVLVKNWGMETNIINEHIIRFSLFIVFTEPVNLNKNKFMMMLPGAANKGKISKYKIPISEYQSYTDYNKTVKLYRLTVELMGLKELGTFDLVNVNVIPGVWNTYEIFGIESAKSYLCEALLSTYGEGLDYLYQPCDLLASLICLNYEPESINKFKFGPVSALKRATFGDNKAIINAALYKKTEPVNDNSSCHFFSKVPKIGTGYYKYFIDLEKFLRIKKTISEKLIDKKLVDIGDNITDF</sequence>
<proteinExistence type="inferred from homology"/>
<comment type="function">
    <text evidence="1">Part of the DNA-dependent RNA polymerase which catalyzes the transcription of viral DNA into RNA using the four ribonucleoside triphosphates as substrates. Responsible for the transcription of early, intermediate and late genes. DNA-dependent RNA polymerase associates with the early transcription factor (ETF), itself composed of OPG118 and OPG133, thereby allowing the early genes transcription. Late transcription, and probably also intermediate transcription, require newly synthesized RNA polymerase.</text>
</comment>
<comment type="catalytic activity">
    <reaction evidence="1">
        <text>RNA(n) + a ribonucleoside 5'-triphosphate = RNA(n+1) + diphosphate</text>
        <dbReference type="Rhea" id="RHEA:21248"/>
        <dbReference type="Rhea" id="RHEA-COMP:14527"/>
        <dbReference type="Rhea" id="RHEA-COMP:17342"/>
        <dbReference type="ChEBI" id="CHEBI:33019"/>
        <dbReference type="ChEBI" id="CHEBI:61557"/>
        <dbReference type="ChEBI" id="CHEBI:140395"/>
        <dbReference type="EC" id="2.7.7.6"/>
    </reaction>
</comment>
<comment type="subunit">
    <text evidence="1">The DNA-dependent RNA polymerase used for intermediate and late genes expression consists of eight subunits Rpo30/OPG66, Rpo7/OPG90, Rpo22/OPG103, Rpo147/OPG105, Rpo18/OPG119, Rpo19/OPG131, Rpo132/OPG151 and Rpo35/OPG156. The same holoenzyme, with the addition of the transcription-specificity factor OPG109, is used for early gene expression.</text>
</comment>
<comment type="subcellular location">
    <subcellularLocation>
        <location evidence="1">Virion</location>
    </subcellularLocation>
    <text evidence="1">All the enzymes and other proteins required to synthesize early mRNAs are packaged within the virion core along with the DNA genome. This is necessary because viral early mRNAs are synthesized within minutes after virus entry into the cell and are extruded through pores in the core particle.</text>
</comment>
<comment type="similarity">
    <text evidence="2">Belongs to the poxviridae DNA-directed RNA polymerase 147 kDa subunit family.</text>
</comment>
<evidence type="ECO:0000250" key="1">
    <source>
        <dbReference type="UniProtKB" id="O57204"/>
    </source>
</evidence>
<evidence type="ECO:0000305" key="2"/>
<feature type="chain" id="PRO_0000073922" description="DNA-directed RNA polymerase 147 kDa polypeptide">
    <location>
        <begin position="1"/>
        <end position="1287"/>
    </location>
</feature>